<organism>
    <name type="scientific">Mycosarcoma maydis</name>
    <name type="common">Corn smut fungus</name>
    <name type="synonym">Ustilago maydis</name>
    <dbReference type="NCBI Taxonomy" id="5270"/>
    <lineage>
        <taxon>Eukaryota</taxon>
        <taxon>Fungi</taxon>
        <taxon>Dikarya</taxon>
        <taxon>Basidiomycota</taxon>
        <taxon>Ustilaginomycotina</taxon>
        <taxon>Ustilaginomycetes</taxon>
        <taxon>Ustilaginales</taxon>
        <taxon>Ustilaginaceae</taxon>
        <taxon>Mycosarcoma</taxon>
    </lineage>
</organism>
<sequence length="274" mass="29825">MTASALAYLEPDSSAELTGVYHLVLDRPEARNAISRSLLQDVLQCLQVLVCKITQPKQDEPLPRVLILRANGPCFCAGADLKERREMSEAEVIEFLQDLRHMLEQVEKLPIPTLAAIDGPALGGGLELALACDFRIAAETVSKIGFPEVKLGIIPGAGGTQRAPRIIGMQRAKELIYTGTQLNATQAKDLGLIDHVAPGSTCLKLCQELAQQMMPSAPLALRAAKMAISMGANVELARGLDLEWACYEPLLESKDRREALDAFQQKRKPIFTGK</sequence>
<protein>
    <recommendedName>
        <fullName evidence="5">Enoyl-CoA isomerase/hydratase fer4</fullName>
        <ecNumber evidence="4">4.2.1.17</ecNumber>
    </recommendedName>
    <alternativeName>
        <fullName evidence="5">Fe-regulated protein 4</fullName>
    </alternativeName>
    <alternativeName>
        <fullName evidence="6">Ferrichrome A biosynthesis protein fer4</fullName>
    </alternativeName>
</protein>
<reference key="1">
    <citation type="journal article" date="2006" name="Nature">
        <title>Insights from the genome of the biotrophic fungal plant pathogen Ustilago maydis.</title>
        <authorList>
            <person name="Kaemper J."/>
            <person name="Kahmann R."/>
            <person name="Boelker M."/>
            <person name="Ma L.-J."/>
            <person name="Brefort T."/>
            <person name="Saville B.J."/>
            <person name="Banuett F."/>
            <person name="Kronstad J.W."/>
            <person name="Gold S.E."/>
            <person name="Mueller O."/>
            <person name="Perlin M.H."/>
            <person name="Woesten H.A.B."/>
            <person name="de Vries R."/>
            <person name="Ruiz-Herrera J."/>
            <person name="Reynaga-Pena C.G."/>
            <person name="Snetselaar K."/>
            <person name="McCann M."/>
            <person name="Perez-Martin J."/>
            <person name="Feldbruegge M."/>
            <person name="Basse C.W."/>
            <person name="Steinberg G."/>
            <person name="Ibeas J.I."/>
            <person name="Holloman W."/>
            <person name="Guzman P."/>
            <person name="Farman M.L."/>
            <person name="Stajich J.E."/>
            <person name="Sentandreu R."/>
            <person name="Gonzalez-Prieto J.M."/>
            <person name="Kennell J.C."/>
            <person name="Molina L."/>
            <person name="Schirawski J."/>
            <person name="Mendoza-Mendoza A."/>
            <person name="Greilinger D."/>
            <person name="Muench K."/>
            <person name="Roessel N."/>
            <person name="Scherer M."/>
            <person name="Vranes M."/>
            <person name="Ladendorf O."/>
            <person name="Vincon V."/>
            <person name="Fuchs U."/>
            <person name="Sandrock B."/>
            <person name="Meng S."/>
            <person name="Ho E.C.H."/>
            <person name="Cahill M.J."/>
            <person name="Boyce K.J."/>
            <person name="Klose J."/>
            <person name="Klosterman S.J."/>
            <person name="Deelstra H.J."/>
            <person name="Ortiz-Castellanos L."/>
            <person name="Li W."/>
            <person name="Sanchez-Alonso P."/>
            <person name="Schreier P.H."/>
            <person name="Haeuser-Hahn I."/>
            <person name="Vaupel M."/>
            <person name="Koopmann E."/>
            <person name="Friedrich G."/>
            <person name="Voss H."/>
            <person name="Schlueter T."/>
            <person name="Margolis J."/>
            <person name="Platt D."/>
            <person name="Swimmer C."/>
            <person name="Gnirke A."/>
            <person name="Chen F."/>
            <person name="Vysotskaia V."/>
            <person name="Mannhaupt G."/>
            <person name="Gueldener U."/>
            <person name="Muensterkoetter M."/>
            <person name="Haase D."/>
            <person name="Oesterheld M."/>
            <person name="Mewes H.-W."/>
            <person name="Mauceli E.W."/>
            <person name="DeCaprio D."/>
            <person name="Wade C.M."/>
            <person name="Butler J."/>
            <person name="Young S.K."/>
            <person name="Jaffe D.B."/>
            <person name="Calvo S.E."/>
            <person name="Nusbaum C."/>
            <person name="Galagan J.E."/>
            <person name="Birren B.W."/>
        </authorList>
    </citation>
    <scope>NUCLEOTIDE SEQUENCE [LARGE SCALE GENOMIC DNA]</scope>
    <source>
        <strain>DSM 14603 / FGSC 9021 / UM521</strain>
    </source>
</reference>
<reference key="2">
    <citation type="submission" date="2014-09" db="EMBL/GenBank/DDBJ databases">
        <authorList>
            <person name="Gueldener U."/>
            <person name="Muensterkoetter M."/>
            <person name="Walter M.C."/>
            <person name="Mannhaupt G."/>
            <person name="Kahmann R."/>
        </authorList>
    </citation>
    <scope>GENOME REANNOTATION</scope>
    <source>
        <strain>DSM 14603 / FGSC 9021 / UM521</strain>
    </source>
</reference>
<reference key="3">
    <citation type="journal article" date="2006" name="Plant Cell">
        <title>A ferroxidation/permeation iron uptake system is required for virulence in Ustilago maydis.</title>
        <authorList>
            <person name="Eichhorn H."/>
            <person name="Lessing F."/>
            <person name="Winterberg B."/>
            <person name="Schirawski J."/>
            <person name="Kamper J."/>
            <person name="Muller P."/>
            <person name="Kahmann R."/>
        </authorList>
    </citation>
    <scope>INDUCTION</scope>
    <scope>FUNCTION</scope>
    <source>
        <strain>DSM 14603 / FGSC 9021 / UM521</strain>
    </source>
</reference>
<reference key="4">
    <citation type="journal article" date="2010" name="Mol. Microbiol.">
        <title>Elucidation of the complete ferrichrome A biosynthetic pathway in Ustilago maydis.</title>
        <authorList>
            <person name="Winterberg B."/>
            <person name="Uhlmann S."/>
            <person name="Linne U."/>
            <person name="Lessing F."/>
            <person name="Marahiel M.A."/>
            <person name="Eichhorn H."/>
            <person name="Kahmann R."/>
            <person name="Schirawski J."/>
        </authorList>
    </citation>
    <scope>FUNCTION</scope>
    <scope>DISRUPTION PHENOTYPE</scope>
    <scope>CATALYTIC ACTIVITY</scope>
</reference>
<accession>Q4PEN0</accession>
<accession>A1A657</accession>
<feature type="chain" id="PRO_0000441960" description="Enoyl-CoA isomerase/hydratase fer4">
    <location>
        <begin position="1"/>
        <end position="274"/>
    </location>
</feature>
<feature type="coiled-coil region" evidence="2">
    <location>
        <begin position="79"/>
        <end position="109"/>
    </location>
</feature>
<feature type="binding site" evidence="1">
    <location>
        <begin position="77"/>
        <end position="81"/>
    </location>
    <ligand>
        <name>substrate</name>
    </ligand>
</feature>
<feature type="binding site" evidence="1">
    <location>
        <position position="124"/>
    </location>
    <ligand>
        <name>substrate</name>
    </ligand>
</feature>
<feature type="site" description="Important for catalytic activity" evidence="1">
    <location>
        <position position="148"/>
    </location>
</feature>
<proteinExistence type="evidence at protein level"/>
<comment type="function">
    <text evidence="3 4">Enoyl-CoA isomerase/hydratase; part of the gene cluster that mediates the biosynthesis of siderophore ferrichrome A which is contributing to organismal virulence (PubMed:17138696, PubMed:20070524). The first step of ferrichrome A biosynthesis is performed by the HMG-CoA synthase hcs1 which catalyzes the generation of HMG-CoA and CoA using acetoacetyl-CoA and acetyl-CoA as substrates (PubMed:20070524). The enoyl-CoA isomerase/hydratase fer4 then catalyzes the conversion of hcs1-produced HMG-CoA to methylglutaconyl-CoA (PubMed:20070524). The acyltransferase fer5 then fuses the fer4-generated methylglutaconyl-CoA with sid1-generated hydroxyornithine to yield methylglutaconyl hydroxyornithine (PubMed:20070524). Methylglutaconyl hydroxyornithine is then available for use by the NRPS fer3 to generate ferrichrome A (PubMed:20070524).</text>
</comment>
<comment type="catalytic activity">
    <reaction evidence="8">
        <text>a (3S)-3-hydroxyacyl-CoA = a (2E)-enoyl-CoA + H2O</text>
        <dbReference type="Rhea" id="RHEA:16105"/>
        <dbReference type="ChEBI" id="CHEBI:15377"/>
        <dbReference type="ChEBI" id="CHEBI:57318"/>
        <dbReference type="ChEBI" id="CHEBI:58856"/>
        <dbReference type="EC" id="4.2.1.17"/>
    </reaction>
</comment>
<comment type="catalytic activity">
    <reaction evidence="8">
        <text>a 4-saturated-(3S)-3-hydroxyacyl-CoA = a (3E)-enoyl-CoA + H2O</text>
        <dbReference type="Rhea" id="RHEA:20724"/>
        <dbReference type="ChEBI" id="CHEBI:15377"/>
        <dbReference type="ChEBI" id="CHEBI:58521"/>
        <dbReference type="ChEBI" id="CHEBI:137480"/>
        <dbReference type="EC" id="4.2.1.17"/>
    </reaction>
</comment>
<comment type="pathway">
    <text evidence="4">Siderophore biosynthesis.</text>
</comment>
<comment type="induction">
    <text evidence="3">Expression regulated by iron through the urbs1 transcription factor (PubMed:17138696).</text>
</comment>
<comment type="disruption phenotype">
    <text evidence="4">Impairs the production of ferrichrome A but does not affect the production of ferrichrome (PubMed:20070524).</text>
</comment>
<comment type="similarity">
    <text evidence="7">Belongs to the enoyl-CoA hydratase/isomerase family.</text>
</comment>
<name>FER4_MYCMD</name>
<gene>
    <name evidence="5" type="primary">fer4</name>
    <name type="ORF">UMAG_01433</name>
</gene>
<evidence type="ECO:0000250" key="1">
    <source>
        <dbReference type="UniProtKB" id="P42126"/>
    </source>
</evidence>
<evidence type="ECO:0000255" key="2"/>
<evidence type="ECO:0000269" key="3">
    <source>
    </source>
</evidence>
<evidence type="ECO:0000269" key="4">
    <source>
    </source>
</evidence>
<evidence type="ECO:0000303" key="5">
    <source>
    </source>
</evidence>
<evidence type="ECO:0000303" key="6">
    <source>
    </source>
</evidence>
<evidence type="ECO:0000305" key="7"/>
<evidence type="ECO:0000305" key="8">
    <source>
    </source>
</evidence>
<dbReference type="EC" id="4.2.1.17" evidence="4"/>
<dbReference type="EMBL" id="CM003141">
    <property type="protein sequence ID" value="KIS71540.1"/>
    <property type="molecule type" value="Genomic_DNA"/>
</dbReference>
<dbReference type="EMBL" id="BK004083">
    <property type="protein sequence ID" value="DAA04938.1"/>
    <property type="molecule type" value="Genomic_DNA"/>
</dbReference>
<dbReference type="RefSeq" id="XP_011387302.1">
    <property type="nucleotide sequence ID" value="XM_011389000.1"/>
</dbReference>
<dbReference type="SMR" id="Q4PEN0"/>
<dbReference type="STRING" id="237631.Q4PEN0"/>
<dbReference type="EnsemblFungi" id="KIS71540">
    <property type="protein sequence ID" value="KIS71540"/>
    <property type="gene ID" value="UMAG_01433"/>
</dbReference>
<dbReference type="GeneID" id="23562457"/>
<dbReference type="KEGG" id="uma:UMAG_01433"/>
<dbReference type="VEuPathDB" id="FungiDB:UMAG_01433"/>
<dbReference type="eggNOG" id="KOG1679">
    <property type="taxonomic scope" value="Eukaryota"/>
</dbReference>
<dbReference type="HOGENOM" id="CLU_009834_7_6_1"/>
<dbReference type="InParanoid" id="Q4PEN0"/>
<dbReference type="OMA" id="RRENIYH"/>
<dbReference type="OrthoDB" id="410701at2759"/>
<dbReference type="BioCyc" id="MetaCyc:MONOMER-18964"/>
<dbReference type="Proteomes" id="UP000000561">
    <property type="component" value="Chromosome 2"/>
</dbReference>
<dbReference type="GO" id="GO:0005739">
    <property type="term" value="C:mitochondrion"/>
    <property type="evidence" value="ECO:0000318"/>
    <property type="project" value="GO_Central"/>
</dbReference>
<dbReference type="GO" id="GO:0004300">
    <property type="term" value="F:enoyl-CoA hydratase activity"/>
    <property type="evidence" value="ECO:0007669"/>
    <property type="project" value="UniProtKB-EC"/>
</dbReference>
<dbReference type="GO" id="GO:0016853">
    <property type="term" value="F:isomerase activity"/>
    <property type="evidence" value="ECO:0007669"/>
    <property type="project" value="UniProtKB-KW"/>
</dbReference>
<dbReference type="GO" id="GO:0006635">
    <property type="term" value="P:fatty acid beta-oxidation"/>
    <property type="evidence" value="ECO:0000318"/>
    <property type="project" value="GO_Central"/>
</dbReference>
<dbReference type="CDD" id="cd06558">
    <property type="entry name" value="crotonase-like"/>
    <property type="match status" value="1"/>
</dbReference>
<dbReference type="FunFam" id="3.90.226.10:FF:000009">
    <property type="entry name" value="Carnitinyl-CoA dehydratase"/>
    <property type="match status" value="1"/>
</dbReference>
<dbReference type="FunFam" id="1.10.12.10:FF:000001">
    <property type="entry name" value="Probable enoyl-CoA hydratase, mitochondrial"/>
    <property type="match status" value="1"/>
</dbReference>
<dbReference type="Gene3D" id="3.90.226.10">
    <property type="entry name" value="2-enoyl-CoA Hydratase, Chain A, domain 1"/>
    <property type="match status" value="1"/>
</dbReference>
<dbReference type="Gene3D" id="1.10.12.10">
    <property type="entry name" value="Lyase 2-enoyl-coa Hydratase, Chain A, domain 2"/>
    <property type="match status" value="1"/>
</dbReference>
<dbReference type="InterPro" id="IPR029045">
    <property type="entry name" value="ClpP/crotonase-like_dom_sf"/>
</dbReference>
<dbReference type="InterPro" id="IPR018376">
    <property type="entry name" value="Enoyl-CoA_hyd/isom_CS"/>
</dbReference>
<dbReference type="InterPro" id="IPR001753">
    <property type="entry name" value="Enoyl-CoA_hydra/iso"/>
</dbReference>
<dbReference type="InterPro" id="IPR014748">
    <property type="entry name" value="Enoyl-CoA_hydra_C"/>
</dbReference>
<dbReference type="PANTHER" id="PTHR11941">
    <property type="entry name" value="ENOYL-COA HYDRATASE-RELATED"/>
    <property type="match status" value="1"/>
</dbReference>
<dbReference type="PANTHER" id="PTHR11941:SF171">
    <property type="entry name" value="SD19268P"/>
    <property type="match status" value="1"/>
</dbReference>
<dbReference type="Pfam" id="PF00378">
    <property type="entry name" value="ECH_1"/>
    <property type="match status" value="1"/>
</dbReference>
<dbReference type="SUPFAM" id="SSF52096">
    <property type="entry name" value="ClpP/crotonase"/>
    <property type="match status" value="1"/>
</dbReference>
<dbReference type="PROSITE" id="PS00166">
    <property type="entry name" value="ENOYL_COA_HYDRATASE"/>
    <property type="match status" value="1"/>
</dbReference>
<keyword id="KW-0175">Coiled coil</keyword>
<keyword id="KW-0413">Isomerase</keyword>
<keyword id="KW-0456">Lyase</keyword>
<keyword id="KW-1185">Reference proteome</keyword>
<keyword id="KW-0843">Virulence</keyword>